<comment type="function">
    <text evidence="1">F(1)F(0) ATP synthase produces ATP from ADP in the presence of a proton or sodium gradient. F-type ATPases consist of two structural domains, F(1) containing the extramembraneous catalytic core and F(0) containing the membrane proton channel, linked together by a central stalk and a peripheral stalk. During catalysis, ATP synthesis in the catalytic domain of F(1) is coupled via a rotary mechanism of the central stalk subunits to proton translocation.</text>
</comment>
<comment type="function">
    <text evidence="1">Key component of the F(0) channel; it plays a direct role in translocation across the membrane. A homomeric c-ring of between 10-14 subunits forms the central stalk rotor element with the F(1) delta and epsilon subunits.</text>
</comment>
<comment type="subunit">
    <text evidence="1">F-type ATPases have 2 components, F(1) - the catalytic core - and F(0) - the membrane proton channel. F(1) has five subunits: alpha(3), beta(3), gamma(1), delta(1), epsilon(1). F(0) has three main subunits: a(1), b(2) and c(10-14). The alpha and beta chains form an alternating ring which encloses part of the gamma chain. F(1) is attached to F(0) by a central stalk formed by the gamma and epsilon chains, while a peripheral stalk is formed by the delta and b chains.</text>
</comment>
<comment type="subcellular location">
    <subcellularLocation>
        <location evidence="1">Cell membrane</location>
        <topology evidence="1">Multi-pass membrane protein</topology>
    </subcellularLocation>
</comment>
<comment type="similarity">
    <text evidence="1">Belongs to the ATPase C chain family.</text>
</comment>
<organism>
    <name type="scientific">Staphylococcus aureus (strain Newman)</name>
    <dbReference type="NCBI Taxonomy" id="426430"/>
    <lineage>
        <taxon>Bacteria</taxon>
        <taxon>Bacillati</taxon>
        <taxon>Bacillota</taxon>
        <taxon>Bacilli</taxon>
        <taxon>Bacillales</taxon>
        <taxon>Staphylococcaceae</taxon>
        <taxon>Staphylococcus</taxon>
    </lineage>
</organism>
<evidence type="ECO:0000255" key="1">
    <source>
        <dbReference type="HAMAP-Rule" id="MF_01396"/>
    </source>
</evidence>
<proteinExistence type="inferred from homology"/>
<reference key="1">
    <citation type="journal article" date="2008" name="J. Bacteriol.">
        <title>Genome sequence of Staphylococcus aureus strain Newman and comparative analysis of staphylococcal genomes: polymorphism and evolution of two major pathogenicity islands.</title>
        <authorList>
            <person name="Baba T."/>
            <person name="Bae T."/>
            <person name="Schneewind O."/>
            <person name="Takeuchi F."/>
            <person name="Hiramatsu K."/>
        </authorList>
    </citation>
    <scope>NUCLEOTIDE SEQUENCE [LARGE SCALE GENOMIC DNA]</scope>
    <source>
        <strain>Newman</strain>
    </source>
</reference>
<protein>
    <recommendedName>
        <fullName evidence="1">ATP synthase subunit c</fullName>
    </recommendedName>
    <alternativeName>
        <fullName evidence="1">ATP synthase F(0) sector subunit c</fullName>
    </alternativeName>
    <alternativeName>
        <fullName evidence="1">F-type ATPase subunit c</fullName>
        <shortName evidence="1">F-ATPase subunit c</shortName>
    </alternativeName>
    <alternativeName>
        <fullName evidence="1">Lipid-binding protein</fullName>
    </alternativeName>
</protein>
<feature type="chain" id="PRO_1000184500" description="ATP synthase subunit c">
    <location>
        <begin position="1"/>
        <end position="70"/>
    </location>
</feature>
<feature type="transmembrane region" description="Helical" evidence="1">
    <location>
        <begin position="4"/>
        <end position="24"/>
    </location>
</feature>
<feature type="transmembrane region" description="Helical" evidence="1">
    <location>
        <begin position="45"/>
        <end position="65"/>
    </location>
</feature>
<feature type="site" description="Reversibly protonated during proton transport" evidence="1">
    <location>
        <position position="54"/>
    </location>
</feature>
<name>ATPL_STAAE</name>
<gene>
    <name evidence="1" type="primary">atpE</name>
    <name type="ordered locus">NWMN_2012</name>
</gene>
<accession>A6QIV2</accession>
<sequence>MNLIAAAIAIGLSALGAGIGNGLIVSRTVEGVARQPEARGQLMGIMFIGVGLVEALPIIGVVIAFMTFAG</sequence>
<dbReference type="EMBL" id="AP009351">
    <property type="protein sequence ID" value="BAF68284.1"/>
    <property type="molecule type" value="Genomic_DNA"/>
</dbReference>
<dbReference type="RefSeq" id="WP_001048816.1">
    <property type="nucleotide sequence ID" value="NZ_JBBIAE010000008.1"/>
</dbReference>
<dbReference type="SMR" id="A6QIV2"/>
<dbReference type="GeneID" id="98346415"/>
<dbReference type="KEGG" id="sae:NWMN_2012"/>
<dbReference type="HOGENOM" id="CLU_148047_1_1_9"/>
<dbReference type="Proteomes" id="UP000006386">
    <property type="component" value="Chromosome"/>
</dbReference>
<dbReference type="GO" id="GO:0005886">
    <property type="term" value="C:plasma membrane"/>
    <property type="evidence" value="ECO:0007669"/>
    <property type="project" value="UniProtKB-SubCell"/>
</dbReference>
<dbReference type="GO" id="GO:0045259">
    <property type="term" value="C:proton-transporting ATP synthase complex"/>
    <property type="evidence" value="ECO:0007669"/>
    <property type="project" value="UniProtKB-KW"/>
</dbReference>
<dbReference type="GO" id="GO:0033177">
    <property type="term" value="C:proton-transporting two-sector ATPase complex, proton-transporting domain"/>
    <property type="evidence" value="ECO:0007669"/>
    <property type="project" value="InterPro"/>
</dbReference>
<dbReference type="GO" id="GO:0008289">
    <property type="term" value="F:lipid binding"/>
    <property type="evidence" value="ECO:0007669"/>
    <property type="project" value="UniProtKB-KW"/>
</dbReference>
<dbReference type="GO" id="GO:0046933">
    <property type="term" value="F:proton-transporting ATP synthase activity, rotational mechanism"/>
    <property type="evidence" value="ECO:0007669"/>
    <property type="project" value="UniProtKB-UniRule"/>
</dbReference>
<dbReference type="CDD" id="cd18185">
    <property type="entry name" value="ATP-synt_Fo_c_ATPE"/>
    <property type="match status" value="1"/>
</dbReference>
<dbReference type="FunFam" id="1.20.20.10:FF:000004">
    <property type="entry name" value="ATP synthase subunit c"/>
    <property type="match status" value="1"/>
</dbReference>
<dbReference type="Gene3D" id="1.20.20.10">
    <property type="entry name" value="F1F0 ATP synthase subunit C"/>
    <property type="match status" value="1"/>
</dbReference>
<dbReference type="HAMAP" id="MF_01396">
    <property type="entry name" value="ATP_synth_c_bact"/>
    <property type="match status" value="1"/>
</dbReference>
<dbReference type="InterPro" id="IPR005953">
    <property type="entry name" value="ATP_synth_csu_bac/chlpt"/>
</dbReference>
<dbReference type="InterPro" id="IPR000454">
    <property type="entry name" value="ATP_synth_F0_csu"/>
</dbReference>
<dbReference type="InterPro" id="IPR020537">
    <property type="entry name" value="ATP_synth_F0_csu_DDCD_BS"/>
</dbReference>
<dbReference type="InterPro" id="IPR038662">
    <property type="entry name" value="ATP_synth_F0_csu_sf"/>
</dbReference>
<dbReference type="InterPro" id="IPR002379">
    <property type="entry name" value="ATPase_proteolipid_c-like_dom"/>
</dbReference>
<dbReference type="InterPro" id="IPR035921">
    <property type="entry name" value="F/V-ATP_Csub_sf"/>
</dbReference>
<dbReference type="NCBIfam" id="TIGR01260">
    <property type="entry name" value="ATP_synt_c"/>
    <property type="match status" value="1"/>
</dbReference>
<dbReference type="NCBIfam" id="NF005363">
    <property type="entry name" value="PRK06876.1"/>
    <property type="match status" value="1"/>
</dbReference>
<dbReference type="Pfam" id="PF00137">
    <property type="entry name" value="ATP-synt_C"/>
    <property type="match status" value="1"/>
</dbReference>
<dbReference type="PRINTS" id="PR00124">
    <property type="entry name" value="ATPASEC"/>
</dbReference>
<dbReference type="SUPFAM" id="SSF81333">
    <property type="entry name" value="F1F0 ATP synthase subunit C"/>
    <property type="match status" value="1"/>
</dbReference>
<dbReference type="PROSITE" id="PS00605">
    <property type="entry name" value="ATPASE_C"/>
    <property type="match status" value="1"/>
</dbReference>
<keyword id="KW-0066">ATP synthesis</keyword>
<keyword id="KW-1003">Cell membrane</keyword>
<keyword id="KW-0138">CF(0)</keyword>
<keyword id="KW-0375">Hydrogen ion transport</keyword>
<keyword id="KW-0406">Ion transport</keyword>
<keyword id="KW-0446">Lipid-binding</keyword>
<keyword id="KW-0472">Membrane</keyword>
<keyword id="KW-0812">Transmembrane</keyword>
<keyword id="KW-1133">Transmembrane helix</keyword>
<keyword id="KW-0813">Transport</keyword>